<name>YJZG_BACSU</name>
<accession>C0H3Z1</accession>
<feature type="chain" id="PRO_0000386661" description="Uncharacterized protein YjzG">
    <location>
        <begin position="1"/>
        <end position="57"/>
    </location>
</feature>
<organism>
    <name type="scientific">Bacillus subtilis (strain 168)</name>
    <dbReference type="NCBI Taxonomy" id="224308"/>
    <lineage>
        <taxon>Bacteria</taxon>
        <taxon>Bacillati</taxon>
        <taxon>Bacillota</taxon>
        <taxon>Bacilli</taxon>
        <taxon>Bacillales</taxon>
        <taxon>Bacillaceae</taxon>
        <taxon>Bacillus</taxon>
    </lineage>
</organism>
<proteinExistence type="predicted"/>
<gene>
    <name type="primary">yjzG</name>
    <name type="ordered locus">BSU11929</name>
</gene>
<reference key="1">
    <citation type="journal article" date="1997" name="Nature">
        <title>The complete genome sequence of the Gram-positive bacterium Bacillus subtilis.</title>
        <authorList>
            <person name="Kunst F."/>
            <person name="Ogasawara N."/>
            <person name="Moszer I."/>
            <person name="Albertini A.M."/>
            <person name="Alloni G."/>
            <person name="Azevedo V."/>
            <person name="Bertero M.G."/>
            <person name="Bessieres P."/>
            <person name="Bolotin A."/>
            <person name="Borchert S."/>
            <person name="Borriss R."/>
            <person name="Boursier L."/>
            <person name="Brans A."/>
            <person name="Braun M."/>
            <person name="Brignell S.C."/>
            <person name="Bron S."/>
            <person name="Brouillet S."/>
            <person name="Bruschi C.V."/>
            <person name="Caldwell B."/>
            <person name="Capuano V."/>
            <person name="Carter N.M."/>
            <person name="Choi S.-K."/>
            <person name="Codani J.-J."/>
            <person name="Connerton I.F."/>
            <person name="Cummings N.J."/>
            <person name="Daniel R.A."/>
            <person name="Denizot F."/>
            <person name="Devine K.M."/>
            <person name="Duesterhoeft A."/>
            <person name="Ehrlich S.D."/>
            <person name="Emmerson P.T."/>
            <person name="Entian K.-D."/>
            <person name="Errington J."/>
            <person name="Fabret C."/>
            <person name="Ferrari E."/>
            <person name="Foulger D."/>
            <person name="Fritz C."/>
            <person name="Fujita M."/>
            <person name="Fujita Y."/>
            <person name="Fuma S."/>
            <person name="Galizzi A."/>
            <person name="Galleron N."/>
            <person name="Ghim S.-Y."/>
            <person name="Glaser P."/>
            <person name="Goffeau A."/>
            <person name="Golightly E.J."/>
            <person name="Grandi G."/>
            <person name="Guiseppi G."/>
            <person name="Guy B.J."/>
            <person name="Haga K."/>
            <person name="Haiech J."/>
            <person name="Harwood C.R."/>
            <person name="Henaut A."/>
            <person name="Hilbert H."/>
            <person name="Holsappel S."/>
            <person name="Hosono S."/>
            <person name="Hullo M.-F."/>
            <person name="Itaya M."/>
            <person name="Jones L.-M."/>
            <person name="Joris B."/>
            <person name="Karamata D."/>
            <person name="Kasahara Y."/>
            <person name="Klaerr-Blanchard M."/>
            <person name="Klein C."/>
            <person name="Kobayashi Y."/>
            <person name="Koetter P."/>
            <person name="Koningstein G."/>
            <person name="Krogh S."/>
            <person name="Kumano M."/>
            <person name="Kurita K."/>
            <person name="Lapidus A."/>
            <person name="Lardinois S."/>
            <person name="Lauber J."/>
            <person name="Lazarevic V."/>
            <person name="Lee S.-M."/>
            <person name="Levine A."/>
            <person name="Liu H."/>
            <person name="Masuda S."/>
            <person name="Mauel C."/>
            <person name="Medigue C."/>
            <person name="Medina N."/>
            <person name="Mellado R.P."/>
            <person name="Mizuno M."/>
            <person name="Moestl D."/>
            <person name="Nakai S."/>
            <person name="Noback M."/>
            <person name="Noone D."/>
            <person name="O'Reilly M."/>
            <person name="Ogawa K."/>
            <person name="Ogiwara A."/>
            <person name="Oudega B."/>
            <person name="Park S.-H."/>
            <person name="Parro V."/>
            <person name="Pohl T.M."/>
            <person name="Portetelle D."/>
            <person name="Porwollik S."/>
            <person name="Prescott A.M."/>
            <person name="Presecan E."/>
            <person name="Pujic P."/>
            <person name="Purnelle B."/>
            <person name="Rapoport G."/>
            <person name="Rey M."/>
            <person name="Reynolds S."/>
            <person name="Rieger M."/>
            <person name="Rivolta C."/>
            <person name="Rocha E."/>
            <person name="Roche B."/>
            <person name="Rose M."/>
            <person name="Sadaie Y."/>
            <person name="Sato T."/>
            <person name="Scanlan E."/>
            <person name="Schleich S."/>
            <person name="Schroeter R."/>
            <person name="Scoffone F."/>
            <person name="Sekiguchi J."/>
            <person name="Sekowska A."/>
            <person name="Seror S.J."/>
            <person name="Serror P."/>
            <person name="Shin B.-S."/>
            <person name="Soldo B."/>
            <person name="Sorokin A."/>
            <person name="Tacconi E."/>
            <person name="Takagi T."/>
            <person name="Takahashi H."/>
            <person name="Takemaru K."/>
            <person name="Takeuchi M."/>
            <person name="Tamakoshi A."/>
            <person name="Tanaka T."/>
            <person name="Terpstra P."/>
            <person name="Tognoni A."/>
            <person name="Tosato V."/>
            <person name="Uchiyama S."/>
            <person name="Vandenbol M."/>
            <person name="Vannier F."/>
            <person name="Vassarotti A."/>
            <person name="Viari A."/>
            <person name="Wambutt R."/>
            <person name="Wedler E."/>
            <person name="Wedler H."/>
            <person name="Weitzenegger T."/>
            <person name="Winters P."/>
            <person name="Wipat A."/>
            <person name="Yamamoto H."/>
            <person name="Yamane K."/>
            <person name="Yasumoto K."/>
            <person name="Yata K."/>
            <person name="Yoshida K."/>
            <person name="Yoshikawa H.-F."/>
            <person name="Zumstein E."/>
            <person name="Yoshikawa H."/>
            <person name="Danchin A."/>
        </authorList>
    </citation>
    <scope>NUCLEOTIDE SEQUENCE [LARGE SCALE GENOMIC DNA]</scope>
    <source>
        <strain>168</strain>
    </source>
</reference>
<dbReference type="EMBL" id="AL009126">
    <property type="protein sequence ID" value="CAX52598.1"/>
    <property type="molecule type" value="Genomic_DNA"/>
</dbReference>
<dbReference type="RefSeq" id="WP_003245022.1">
    <property type="nucleotide sequence ID" value="NZ_OZ025638.1"/>
</dbReference>
<dbReference type="RefSeq" id="YP_003097708.1">
    <property type="nucleotide sequence ID" value="NC_000964.3"/>
</dbReference>
<dbReference type="SMR" id="C0H3Z1"/>
<dbReference type="FunCoup" id="C0H3Z1">
    <property type="interactions" value="2"/>
</dbReference>
<dbReference type="STRING" id="224308.BSU11929"/>
<dbReference type="PaxDb" id="224308-BSU11929"/>
<dbReference type="EnsemblBacteria" id="CAX52598">
    <property type="protein sequence ID" value="CAX52598"/>
    <property type="gene ID" value="BSU_11929"/>
</dbReference>
<dbReference type="GeneID" id="8303177"/>
<dbReference type="KEGG" id="bsu:BSU11929"/>
<dbReference type="PATRIC" id="fig|224308.179.peg.1287"/>
<dbReference type="InParanoid" id="C0H3Z1"/>
<dbReference type="OrthoDB" id="2899164at2"/>
<dbReference type="BioCyc" id="BSUB:BSU11929-MONOMER"/>
<dbReference type="Proteomes" id="UP000001570">
    <property type="component" value="Chromosome"/>
</dbReference>
<sequence length="57" mass="6691">MMKNGFAYKNGKLVNIFCGKEELYNELKAFLVKTFSINVKEVSRPSIYRRTKSKQLE</sequence>
<keyword id="KW-1185">Reference proteome</keyword>
<protein>
    <recommendedName>
        <fullName>Uncharacterized protein YjzG</fullName>
    </recommendedName>
</protein>